<feature type="chain" id="PRO_0000387296" description="Probable inorganic carbon transporter subunit DabA">
    <location>
        <begin position="1"/>
        <end position="838"/>
    </location>
</feature>
<feature type="binding site" evidence="1">
    <location>
        <position position="353"/>
    </location>
    <ligand>
        <name>Zn(2+)</name>
        <dbReference type="ChEBI" id="CHEBI:29105"/>
    </ligand>
</feature>
<feature type="binding site" evidence="1">
    <location>
        <position position="355"/>
    </location>
    <ligand>
        <name>Zn(2+)</name>
        <dbReference type="ChEBI" id="CHEBI:29105"/>
    </ligand>
</feature>
<feature type="binding site" evidence="1">
    <location>
        <position position="537"/>
    </location>
    <ligand>
        <name>Zn(2+)</name>
        <dbReference type="ChEBI" id="CHEBI:29105"/>
    </ligand>
</feature>
<feature type="binding site" evidence="1">
    <location>
        <position position="552"/>
    </location>
    <ligand>
        <name>Zn(2+)</name>
        <dbReference type="ChEBI" id="CHEBI:29105"/>
    </ligand>
</feature>
<dbReference type="EMBL" id="CP000686">
    <property type="protein sequence ID" value="ABQ92206.1"/>
    <property type="molecule type" value="Genomic_DNA"/>
</dbReference>
<dbReference type="STRING" id="357808.RoseRS_3853"/>
<dbReference type="KEGG" id="rrs:RoseRS_3853"/>
<dbReference type="eggNOG" id="COG3002">
    <property type="taxonomic scope" value="Bacteria"/>
</dbReference>
<dbReference type="HOGENOM" id="CLU_009885_1_0_0"/>
<dbReference type="OrthoDB" id="9805101at2"/>
<dbReference type="Proteomes" id="UP000006554">
    <property type="component" value="Chromosome"/>
</dbReference>
<dbReference type="GO" id="GO:0005886">
    <property type="term" value="C:plasma membrane"/>
    <property type="evidence" value="ECO:0007669"/>
    <property type="project" value="UniProtKB-SubCell"/>
</dbReference>
<dbReference type="GO" id="GO:0008270">
    <property type="term" value="F:zinc ion binding"/>
    <property type="evidence" value="ECO:0007669"/>
    <property type="project" value="UniProtKB-UniRule"/>
</dbReference>
<dbReference type="HAMAP" id="MF_01871">
    <property type="entry name" value="DabA"/>
    <property type="match status" value="1"/>
</dbReference>
<dbReference type="InterPro" id="IPR018752">
    <property type="entry name" value="DabA"/>
</dbReference>
<dbReference type="PANTHER" id="PTHR38344:SF1">
    <property type="entry name" value="INORGANIC CARBON TRANSPORTER SUBUNIT DABA-RELATED"/>
    <property type="match status" value="1"/>
</dbReference>
<dbReference type="PANTHER" id="PTHR38344">
    <property type="entry name" value="UPF0753 PROTEIN AQ_863"/>
    <property type="match status" value="1"/>
</dbReference>
<dbReference type="Pfam" id="PF10070">
    <property type="entry name" value="DabA"/>
    <property type="match status" value="1"/>
</dbReference>
<gene>
    <name evidence="1" type="primary">dabA</name>
    <name type="ordered locus">RoseRS_3853</name>
</gene>
<keyword id="KW-1003">Cell membrane</keyword>
<keyword id="KW-0472">Membrane</keyword>
<keyword id="KW-0479">Metal-binding</keyword>
<keyword id="KW-0813">Transport</keyword>
<keyword id="KW-0862">Zinc</keyword>
<reference key="1">
    <citation type="submission" date="2007-04" db="EMBL/GenBank/DDBJ databases">
        <title>Complete sequence of Roseiflexus sp. RS-1.</title>
        <authorList>
            <consortium name="US DOE Joint Genome Institute"/>
            <person name="Copeland A."/>
            <person name="Lucas S."/>
            <person name="Lapidus A."/>
            <person name="Barry K."/>
            <person name="Detter J.C."/>
            <person name="Glavina del Rio T."/>
            <person name="Hammon N."/>
            <person name="Israni S."/>
            <person name="Dalin E."/>
            <person name="Tice H."/>
            <person name="Pitluck S."/>
            <person name="Chertkov O."/>
            <person name="Brettin T."/>
            <person name="Bruce D."/>
            <person name="Han C."/>
            <person name="Schmutz J."/>
            <person name="Larimer F."/>
            <person name="Land M."/>
            <person name="Hauser L."/>
            <person name="Kyrpides N."/>
            <person name="Mikhailova N."/>
            <person name="Bryant D.A."/>
            <person name="Richardson P."/>
        </authorList>
    </citation>
    <scope>NUCLEOTIDE SEQUENCE [LARGE SCALE GENOMIC DNA]</scope>
    <source>
        <strain>RS-1</strain>
    </source>
</reference>
<comment type="function">
    <text evidence="1">Part of an energy-coupled inorganic carbon pump.</text>
</comment>
<comment type="cofactor">
    <cofactor evidence="1">
        <name>Zn(2+)</name>
        <dbReference type="ChEBI" id="CHEBI:29105"/>
    </cofactor>
</comment>
<comment type="subunit">
    <text evidence="1">Forms a complex with DabB.</text>
</comment>
<comment type="subcellular location">
    <subcellularLocation>
        <location evidence="1">Cell membrane</location>
        <topology evidence="1">Peripheral membrane protein</topology>
    </subcellularLocation>
</comment>
<comment type="similarity">
    <text evidence="1">Belongs to the inorganic carbon transporter (TC 9.A.2) DabA family.</text>
</comment>
<proteinExistence type="inferred from homology"/>
<accession>A5V003</accession>
<organism>
    <name type="scientific">Roseiflexus sp. (strain RS-1)</name>
    <dbReference type="NCBI Taxonomy" id="357808"/>
    <lineage>
        <taxon>Bacteria</taxon>
        <taxon>Bacillati</taxon>
        <taxon>Chloroflexota</taxon>
        <taxon>Chloroflexia</taxon>
        <taxon>Chloroflexales</taxon>
        <taxon>Roseiflexineae</taxon>
        <taxon>Roseiflexaceae</taxon>
        <taxon>Roseiflexus</taxon>
    </lineage>
</organism>
<name>DABA_ROSS1</name>
<sequence length="838" mass="92128">MNMQMADVQTRPARTAPTYAPAIDTIKEAVRRAEQRIAPLWPLRYFVAVNPYLGLIDHSFESAAYILARRAGARMTAPRSFYAQAIRSGRITDADLEAALAGGSPFPGAPANVAALKAFALGDEPEPTFPILPTVADAARKVTGINWADVVTDLISTWAGAYFDLGQSYWRSPWKHLPPYAAWRAEAAHDRTPQTRGVHGFRQALREMPESAMETIVAAVEKLNIPINGLEAYLHRLLLSIHGWAAYARYLRWDAELYGGEDHTLTDLLAIRLVWEVALWHSFARKGVADVWRSMAGEYVNDRPDPALQRALAGDLLLQRAFEKAYQRQFFAQLGATTPARVAARKRVQAAFCIDVRSEIFRRALETVTDEIETIGFAGFFGFPIEYVPLAETRGGAQCPVLLTPQFVIAESVDGASERDVNAAIEKRAQNQRVAKAWRMFKFAPISCFGFVGPVGLAYVRKLALDTLGITRPVPHPATFGLDAHTRERVAPSLEPRTLGGRTTGMTLEQRVAAAEGALKAMSLTNNFARLVLLTGHGSTTVNNPHATGLDCGACGGHTGEANVRVAVRILNDPAVRAGLKERGLIIPDDTVFLAGLHDTTTDDVTIFDKAHIPASHTADLKRLEADLAAAGRLARAERSMLLKIGTKTDIDSAVRRRSKDWSQVRPEWGLAGCAAFIVAPRDRNAGVVMNGRSFLHSYEWRQDEGFGVLELIMTAPMIVASWINLQYYGSTVDNRVFGSGNKTLHNVVGTLGVLEGNAGDLRVGLPWQSVHDGEKYVHEPMRLHVMIEAPIDAMTAIIARHEQVRQLLDNGWLYLFALDASGKVTHRYIGGLQWEEC</sequence>
<protein>
    <recommendedName>
        <fullName evidence="1">Probable inorganic carbon transporter subunit DabA</fullName>
    </recommendedName>
</protein>
<evidence type="ECO:0000255" key="1">
    <source>
        <dbReference type="HAMAP-Rule" id="MF_01871"/>
    </source>
</evidence>